<protein>
    <recommendedName>
        <fullName>Protein disulfide isomerase-like 1-5</fullName>
        <shortName>AtPDIL1-5</shortName>
        <ecNumber>5.3.4.1</ecNumber>
    </recommendedName>
    <alternativeName>
        <fullName>Protein disulfide isomerase 3</fullName>
        <shortName>AtPDI3</shortName>
    </alternativeName>
    <alternativeName>
        <fullName>Protein disulfide isomerase-like 3-1</fullName>
        <shortName>AtPDIL3-1</shortName>
    </alternativeName>
</protein>
<evidence type="ECO:0000250" key="1"/>
<evidence type="ECO:0000255" key="2"/>
<evidence type="ECO:0000255" key="3">
    <source>
        <dbReference type="PROSITE-ProRule" id="PRU00691"/>
    </source>
</evidence>
<evidence type="ECO:0000255" key="4">
    <source>
        <dbReference type="PROSITE-ProRule" id="PRU10138"/>
    </source>
</evidence>
<evidence type="ECO:0000269" key="5">
    <source>
    </source>
</evidence>
<evidence type="ECO:0000305" key="6"/>
<gene>
    <name type="primary">PDIL1-5</name>
    <name type="synonym">PDI3</name>
    <name type="synonym">PDIL3-1</name>
    <name type="ordered locus">At1g52260</name>
    <name type="ORF">F19K6.17</name>
</gene>
<reference key="1">
    <citation type="journal article" date="2000" name="Nature">
        <title>Sequence and analysis of chromosome 1 of the plant Arabidopsis thaliana.</title>
        <authorList>
            <person name="Theologis A."/>
            <person name="Ecker J.R."/>
            <person name="Palm C.J."/>
            <person name="Federspiel N.A."/>
            <person name="Kaul S."/>
            <person name="White O."/>
            <person name="Alonso J."/>
            <person name="Altafi H."/>
            <person name="Araujo R."/>
            <person name="Bowman C.L."/>
            <person name="Brooks S.Y."/>
            <person name="Buehler E."/>
            <person name="Chan A."/>
            <person name="Chao Q."/>
            <person name="Chen H."/>
            <person name="Cheuk R.F."/>
            <person name="Chin C.W."/>
            <person name="Chung M.K."/>
            <person name="Conn L."/>
            <person name="Conway A.B."/>
            <person name="Conway A.R."/>
            <person name="Creasy T.H."/>
            <person name="Dewar K."/>
            <person name="Dunn P."/>
            <person name="Etgu P."/>
            <person name="Feldblyum T.V."/>
            <person name="Feng J.-D."/>
            <person name="Fong B."/>
            <person name="Fujii C.Y."/>
            <person name="Gill J.E."/>
            <person name="Goldsmith A.D."/>
            <person name="Haas B."/>
            <person name="Hansen N.F."/>
            <person name="Hughes B."/>
            <person name="Huizar L."/>
            <person name="Hunter J.L."/>
            <person name="Jenkins J."/>
            <person name="Johnson-Hopson C."/>
            <person name="Khan S."/>
            <person name="Khaykin E."/>
            <person name="Kim C.J."/>
            <person name="Koo H.L."/>
            <person name="Kremenetskaia I."/>
            <person name="Kurtz D.B."/>
            <person name="Kwan A."/>
            <person name="Lam B."/>
            <person name="Langin-Hooper S."/>
            <person name="Lee A."/>
            <person name="Lee J.M."/>
            <person name="Lenz C.A."/>
            <person name="Li J.H."/>
            <person name="Li Y.-P."/>
            <person name="Lin X."/>
            <person name="Liu S.X."/>
            <person name="Liu Z.A."/>
            <person name="Luros J.S."/>
            <person name="Maiti R."/>
            <person name="Marziali A."/>
            <person name="Militscher J."/>
            <person name="Miranda M."/>
            <person name="Nguyen M."/>
            <person name="Nierman W.C."/>
            <person name="Osborne B.I."/>
            <person name="Pai G."/>
            <person name="Peterson J."/>
            <person name="Pham P.K."/>
            <person name="Rizzo M."/>
            <person name="Rooney T."/>
            <person name="Rowley D."/>
            <person name="Sakano H."/>
            <person name="Salzberg S.L."/>
            <person name="Schwartz J.R."/>
            <person name="Shinn P."/>
            <person name="Southwick A.M."/>
            <person name="Sun H."/>
            <person name="Tallon L.J."/>
            <person name="Tambunga G."/>
            <person name="Toriumi M.J."/>
            <person name="Town C.D."/>
            <person name="Utterback T."/>
            <person name="Van Aken S."/>
            <person name="Vaysberg M."/>
            <person name="Vysotskaia V.S."/>
            <person name="Walker M."/>
            <person name="Wu D."/>
            <person name="Yu G."/>
            <person name="Fraser C.M."/>
            <person name="Venter J.C."/>
            <person name="Davis R.W."/>
        </authorList>
    </citation>
    <scope>NUCLEOTIDE SEQUENCE [LARGE SCALE GENOMIC DNA]</scope>
    <source>
        <strain>cv. Columbia</strain>
    </source>
</reference>
<reference key="2">
    <citation type="journal article" date="2017" name="Plant J.">
        <title>Araport11: a complete reannotation of the Arabidopsis thaliana reference genome.</title>
        <authorList>
            <person name="Cheng C.Y."/>
            <person name="Krishnakumar V."/>
            <person name="Chan A.P."/>
            <person name="Thibaud-Nissen F."/>
            <person name="Schobel S."/>
            <person name="Town C.D."/>
        </authorList>
    </citation>
    <scope>GENOME REANNOTATION</scope>
    <source>
        <strain>cv. Columbia</strain>
    </source>
</reference>
<reference key="3">
    <citation type="submission" date="2007-02" db="EMBL/GenBank/DDBJ databases">
        <title>Arabidopsis ORF clones.</title>
        <authorList>
            <person name="Bautista V.R."/>
            <person name="Kim C.J."/>
            <person name="Chen H."/>
            <person name="Wu S.Y."/>
            <person name="De Los Reyes C."/>
            <person name="Ecker J.R."/>
        </authorList>
    </citation>
    <scope>NUCLEOTIDE SEQUENCE [LARGE SCALE MRNA]</scope>
    <source>
        <strain>cv. Columbia</strain>
    </source>
</reference>
<reference key="4">
    <citation type="journal article" date="2005" name="Plant Physiol.">
        <title>Phylogenetic analyses identify 10 classes of the protein disulfide isomerase family in plants, including single-domain protein disulfide isomerase-related proteins.</title>
        <authorList>
            <person name="Houston N.L."/>
            <person name="Fan C."/>
            <person name="Xiang J.Q."/>
            <person name="Schulze J.M."/>
            <person name="Jung R."/>
            <person name="Boston R.S."/>
        </authorList>
    </citation>
    <scope>GENE FAMILY</scope>
    <scope>NOMENCLATURE</scope>
</reference>
<reference key="5">
    <citation type="journal article" date="2008" name="Mol. Genet. Genomics">
        <title>Endoplasmic reticulum stress activates the expression of a sub-group of protein disulfide isomerase genes and AtbZIP60 modulates the response in Arabidopsis thaliana.</title>
        <authorList>
            <person name="Lu D.-P."/>
            <person name="Christopher D.A."/>
        </authorList>
    </citation>
    <scope>TISSUE SPECIFICITY</scope>
</reference>
<reference key="6">
    <citation type="journal article" date="2010" name="BMC Plant Biol.">
        <title>The protein disulfide isomerase gene family in bread wheat (T. aestivum L.).</title>
        <authorList>
            <person name="d'Aloisio E."/>
            <person name="Paolacci A.R."/>
            <person name="Dhanapal A.P."/>
            <person name="Tanzarella O.A."/>
            <person name="Porceddu E."/>
            <person name="Ciaffi M."/>
        </authorList>
    </citation>
    <scope>GENE FAMILY</scope>
    <scope>NOMENCLATURE</scope>
</reference>
<keyword id="KW-1015">Disulfide bond</keyword>
<keyword id="KW-0256">Endoplasmic reticulum</keyword>
<keyword id="KW-0325">Glycoprotein</keyword>
<keyword id="KW-0413">Isomerase</keyword>
<keyword id="KW-0676">Redox-active center</keyword>
<keyword id="KW-1185">Reference proteome</keyword>
<keyword id="KW-0677">Repeat</keyword>
<keyword id="KW-0732">Signal</keyword>
<accession>A3KPF5</accession>
<accession>Q9C818</accession>
<sequence length="537" mass="60158">MSLIPKPISKVSTFTFILLILLSFTIIIAYSSPDSNVESNEPGFDSDLDQLLAVDEQLQEDRPEQQSEAETVSKAQRIVLELNGDYTKRVIDGNEFVMVLGYAPWCARSAELMPRFAEAATALKEIGSSVLMAKIDGDRYSKIASELEIKGFPTLLLFVNGTSLTYNGGSSAEDIVIWVQKKTGAPIITLNTVDEAPRFLDKYHTFVLGLFEKFEGSEHNEFVKAAKSDDEIQFIETRDSDVAKLLFPDLKSNNVFIGLVKPEAERYTVYDGSYKMEKILEFLGSNKFPLFTKLTETNTVWVYSSPVKLQVMLFSKADDFQKLAQPLEDIARKFKSKLMFIYVDITNENLAMPFLILFGIEAGNKTVVAAFDNNLNSKYLLESDPSPNSIEEFCSGLAHGTVSRYYRSEPVPDNENASIVTVVGKTFDGLVLNSRENVLLEVHTPWCVNCEALSKQIEKLAKHFKGFENLVFARIDASANEHTKLQVDDKYPIILLYKSGEKEKPLKLSTKLSAKDIAVFINEELLKPKNGSAKDEL</sequence>
<name>PDI15_ARATH</name>
<dbReference type="EC" id="5.3.4.1"/>
<dbReference type="EMBL" id="AC037424">
    <property type="protein sequence ID" value="AAG51554.1"/>
    <property type="status" value="ALT_SEQ"/>
    <property type="molecule type" value="Genomic_DNA"/>
</dbReference>
<dbReference type="EMBL" id="CP002684">
    <property type="protein sequence ID" value="AEE32775.1"/>
    <property type="molecule type" value="Genomic_DNA"/>
</dbReference>
<dbReference type="EMBL" id="BT030322">
    <property type="protein sequence ID" value="ABO09885.1"/>
    <property type="molecule type" value="mRNA"/>
</dbReference>
<dbReference type="PIR" id="F96562">
    <property type="entry name" value="F96562"/>
</dbReference>
<dbReference type="RefSeq" id="NP_175636.2">
    <property type="nucleotide sequence ID" value="NM_104105.3"/>
</dbReference>
<dbReference type="SMR" id="A3KPF5"/>
<dbReference type="FunCoup" id="A3KPF5">
    <property type="interactions" value="79"/>
</dbReference>
<dbReference type="STRING" id="3702.A3KPF5"/>
<dbReference type="GlyCosmos" id="A3KPF5">
    <property type="glycosylation" value="4 sites, No reported glycans"/>
</dbReference>
<dbReference type="GlyGen" id="A3KPF5">
    <property type="glycosylation" value="4 sites"/>
</dbReference>
<dbReference type="iPTMnet" id="A3KPF5"/>
<dbReference type="PaxDb" id="3702-AT1G52260.1"/>
<dbReference type="ProteomicsDB" id="236378"/>
<dbReference type="EnsemblPlants" id="AT1G52260.1">
    <property type="protein sequence ID" value="AT1G52260.1"/>
    <property type="gene ID" value="AT1G52260"/>
</dbReference>
<dbReference type="GeneID" id="841656"/>
<dbReference type="Gramene" id="AT1G52260.1">
    <property type="protein sequence ID" value="AT1G52260.1"/>
    <property type="gene ID" value="AT1G52260"/>
</dbReference>
<dbReference type="KEGG" id="ath:AT1G52260"/>
<dbReference type="Araport" id="AT1G52260"/>
<dbReference type="TAIR" id="AT1G52260">
    <property type="gene designation" value="PDIL1-5"/>
</dbReference>
<dbReference type="eggNOG" id="KOG0190">
    <property type="taxonomic scope" value="Eukaryota"/>
</dbReference>
<dbReference type="HOGENOM" id="CLU_025879_7_0_1"/>
<dbReference type="InParanoid" id="A3KPF5"/>
<dbReference type="OMA" id="FTPWCIN"/>
<dbReference type="PhylomeDB" id="A3KPF5"/>
<dbReference type="PRO" id="PR:A3KPF5"/>
<dbReference type="Proteomes" id="UP000006548">
    <property type="component" value="Chromosome 1"/>
</dbReference>
<dbReference type="ExpressionAtlas" id="A3KPF5">
    <property type="expression patterns" value="baseline and differential"/>
</dbReference>
<dbReference type="GO" id="GO:0005783">
    <property type="term" value="C:endoplasmic reticulum"/>
    <property type="evidence" value="ECO:0007005"/>
    <property type="project" value="TAIR"/>
</dbReference>
<dbReference type="GO" id="GO:0005788">
    <property type="term" value="C:endoplasmic reticulum lumen"/>
    <property type="evidence" value="ECO:0007669"/>
    <property type="project" value="UniProtKB-SubCell"/>
</dbReference>
<dbReference type="GO" id="GO:0005634">
    <property type="term" value="C:nucleus"/>
    <property type="evidence" value="ECO:0007005"/>
    <property type="project" value="TAIR"/>
</dbReference>
<dbReference type="GO" id="GO:0003756">
    <property type="term" value="F:protein disulfide isomerase activity"/>
    <property type="evidence" value="ECO:0000250"/>
    <property type="project" value="TAIR"/>
</dbReference>
<dbReference type="CDD" id="cd02961">
    <property type="entry name" value="PDI_a_family"/>
    <property type="match status" value="1"/>
</dbReference>
<dbReference type="CDD" id="cd02995">
    <property type="entry name" value="PDI_a_PDI_a'_C"/>
    <property type="match status" value="1"/>
</dbReference>
<dbReference type="CDD" id="cd02982">
    <property type="entry name" value="PDI_b'_family"/>
    <property type="match status" value="1"/>
</dbReference>
<dbReference type="CDD" id="cd02981">
    <property type="entry name" value="PDI_b_family"/>
    <property type="match status" value="1"/>
</dbReference>
<dbReference type="FunFam" id="3.40.30.10:FF:000201">
    <property type="entry name" value="Protein disulfide isomerase-like 1-5"/>
    <property type="match status" value="1"/>
</dbReference>
<dbReference type="FunFam" id="3.40.30.10:FF:000204">
    <property type="entry name" value="Protein disulfide isomerase-like 1-6"/>
    <property type="match status" value="1"/>
</dbReference>
<dbReference type="FunFam" id="3.40.30.10:FF:000134">
    <property type="entry name" value="Protein disulfide-isomerase"/>
    <property type="match status" value="1"/>
</dbReference>
<dbReference type="FunFam" id="3.40.30.10:FF:000042">
    <property type="entry name" value="protein disulfide-isomerase A2"/>
    <property type="match status" value="1"/>
</dbReference>
<dbReference type="Gene3D" id="3.40.30.10">
    <property type="entry name" value="Glutaredoxin"/>
    <property type="match status" value="4"/>
</dbReference>
<dbReference type="InterPro" id="IPR036249">
    <property type="entry name" value="Thioredoxin-like_sf"/>
</dbReference>
<dbReference type="InterPro" id="IPR013766">
    <property type="entry name" value="Thioredoxin_domain"/>
</dbReference>
<dbReference type="PANTHER" id="PTHR18929">
    <property type="entry name" value="PROTEIN DISULFIDE ISOMERASE"/>
    <property type="match status" value="1"/>
</dbReference>
<dbReference type="PANTHER" id="PTHR18929:SF189">
    <property type="entry name" value="PROTEIN DISULFIDE ISOMERASE-LIKE 1-5-RELATED"/>
    <property type="match status" value="1"/>
</dbReference>
<dbReference type="Pfam" id="PF00085">
    <property type="entry name" value="Thioredoxin"/>
    <property type="match status" value="2"/>
</dbReference>
<dbReference type="Pfam" id="PF13848">
    <property type="entry name" value="Thioredoxin_6"/>
    <property type="match status" value="1"/>
</dbReference>
<dbReference type="SUPFAM" id="SSF52833">
    <property type="entry name" value="Thioredoxin-like"/>
    <property type="match status" value="4"/>
</dbReference>
<dbReference type="PROSITE" id="PS00014">
    <property type="entry name" value="ER_TARGET"/>
    <property type="match status" value="1"/>
</dbReference>
<dbReference type="PROSITE" id="PS51352">
    <property type="entry name" value="THIOREDOXIN_2"/>
    <property type="match status" value="2"/>
</dbReference>
<comment type="function">
    <text evidence="1">Acts as a protein-folding catalyst that interacts with nascent polypeptides to catalyze the formation, isomerization, and reduction or oxidation of disulfide bonds.</text>
</comment>
<comment type="catalytic activity">
    <reaction>
        <text>Catalyzes the rearrangement of -S-S- bonds in proteins.</text>
        <dbReference type="EC" id="5.3.4.1"/>
    </reaction>
</comment>
<comment type="subcellular location">
    <subcellularLocation>
        <location evidence="6">Endoplasmic reticulum lumen</location>
    </subcellularLocation>
</comment>
<comment type="tissue specificity">
    <text evidence="5">Widely expressed.</text>
</comment>
<comment type="similarity">
    <text evidence="6">Belongs to the protein disulfide isomerase family.</text>
</comment>
<comment type="sequence caution" evidence="6">
    <conflict type="erroneous gene model prediction">
        <sequence resource="EMBL-CDS" id="AAG51554"/>
    </conflict>
</comment>
<organism>
    <name type="scientific">Arabidopsis thaliana</name>
    <name type="common">Mouse-ear cress</name>
    <dbReference type="NCBI Taxonomy" id="3702"/>
    <lineage>
        <taxon>Eukaryota</taxon>
        <taxon>Viridiplantae</taxon>
        <taxon>Streptophyta</taxon>
        <taxon>Embryophyta</taxon>
        <taxon>Tracheophyta</taxon>
        <taxon>Spermatophyta</taxon>
        <taxon>Magnoliopsida</taxon>
        <taxon>eudicotyledons</taxon>
        <taxon>Gunneridae</taxon>
        <taxon>Pentapetalae</taxon>
        <taxon>rosids</taxon>
        <taxon>malvids</taxon>
        <taxon>Brassicales</taxon>
        <taxon>Brassicaceae</taxon>
        <taxon>Camelineae</taxon>
        <taxon>Arabidopsis</taxon>
    </lineage>
</organism>
<proteinExistence type="evidence at transcript level"/>
<feature type="signal peptide" evidence="2">
    <location>
        <begin position="1"/>
        <end position="29"/>
    </location>
</feature>
<feature type="chain" id="PRO_0000400020" description="Protein disulfide isomerase-like 1-5">
    <location>
        <begin position="30"/>
        <end position="537"/>
    </location>
</feature>
<feature type="domain" description="Thioredoxin 1" evidence="3">
    <location>
        <begin position="58"/>
        <end position="184"/>
    </location>
</feature>
<feature type="domain" description="Thioredoxin 2" evidence="3">
    <location>
        <begin position="380"/>
        <end position="526"/>
    </location>
</feature>
<feature type="short sequence motif" description="Prevents secretion from ER" evidence="4">
    <location>
        <begin position="534"/>
        <end position="537"/>
    </location>
</feature>
<feature type="active site" description="Nucleophile" evidence="1">
    <location>
        <position position="106"/>
    </location>
</feature>
<feature type="active site" description="Nucleophile" evidence="1">
    <location>
        <position position="447"/>
    </location>
</feature>
<feature type="active site" description="Nucleophile" evidence="1">
    <location>
        <position position="450"/>
    </location>
</feature>
<feature type="glycosylation site" description="N-linked (GlcNAc...) asparagine" evidence="2">
    <location>
        <position position="160"/>
    </location>
</feature>
<feature type="glycosylation site" description="N-linked (GlcNAc...) asparagine" evidence="2">
    <location>
        <position position="364"/>
    </location>
</feature>
<feature type="glycosylation site" description="N-linked (GlcNAc...) asparagine" evidence="2">
    <location>
        <position position="416"/>
    </location>
</feature>
<feature type="glycosylation site" description="N-linked (GlcNAc...) asparagine" evidence="2">
    <location>
        <position position="530"/>
    </location>
</feature>
<feature type="disulfide bond" description="Redox-active" evidence="3">
    <location>
        <begin position="447"/>
        <end position="450"/>
    </location>
</feature>